<keyword id="KW-0025">Alternative splicing</keyword>
<keyword id="KW-1185">Reference proteome</keyword>
<name>PIR_ARATH</name>
<comment type="function">
    <text>Involved in regulation of actin and microtubule organization. Part of a WAVE complex that activates the ARP2/3 complex. Interacts with the active form of RHO-family GTPases.</text>
</comment>
<comment type="subunit">
    <text>Binds NAP1 and ROP2, but not ROP8.</text>
</comment>
<comment type="interaction">
    <interactant intactId="EBI-1547858">
        <id>Q5S2C3</id>
    </interactant>
    <interactant intactId="EBI-1547830">
        <id>Q5S2C4</id>
        <label>NAP1</label>
    </interactant>
    <organismsDiffer>false</organismsDiffer>
    <experiments>5</experiments>
</comment>
<comment type="alternative products">
    <event type="alternative splicing"/>
    <isoform>
        <id>Q5S2C3-1</id>
        <name>1</name>
        <sequence type="displayed"/>
    </isoform>
    <isoform>
        <id>Q5S2C3-2</id>
        <name>2</name>
        <sequence type="described" ref="VSP_041592"/>
    </isoform>
</comment>
<comment type="tissue specificity">
    <text evidence="1 2 3 4">Expressed in roots, root hairs, hypocotyls, cotyledons, stems, leaves, trichomes and flowers.</text>
</comment>
<organism>
    <name type="scientific">Arabidopsis thaliana</name>
    <name type="common">Mouse-ear cress</name>
    <dbReference type="NCBI Taxonomy" id="3702"/>
    <lineage>
        <taxon>Eukaryota</taxon>
        <taxon>Viridiplantae</taxon>
        <taxon>Streptophyta</taxon>
        <taxon>Embryophyta</taxon>
        <taxon>Tracheophyta</taxon>
        <taxon>Spermatophyta</taxon>
        <taxon>Magnoliopsida</taxon>
        <taxon>eudicotyledons</taxon>
        <taxon>Gunneridae</taxon>
        <taxon>Pentapetalae</taxon>
        <taxon>rosids</taxon>
        <taxon>malvids</taxon>
        <taxon>Brassicales</taxon>
        <taxon>Brassicaceae</taxon>
        <taxon>Camelineae</taxon>
        <taxon>Arabidopsis</taxon>
    </lineage>
</organism>
<proteinExistence type="evidence at protein level"/>
<sequence length="1282" mass="145488">MAVPVEEAIAALSTFSLEDEQPEVQGPAVMVSAERAATDSPIEYSDVAAYRLSLSEDTKALNQLNTLIQEGKEMASILYTYRSCVKALPQLPESMKHSQADLYLETYQVLDLEMSRLREIQRWQSSASAKLAADMQRFSRPERRINGPTVTHLWSMLKLLDVLVQLDHLKNAKASIPNDFSWYKRTFTQVSAQWQDTDTMREELDDLQIFLSTRWAILLNLHVEMFRVNNVEDILQVLIVFIVESLELDFALLFPERYILLRVLPVLVVLATPSEKDTEALYKRVKLNRLINIFKNDPVIPAFPDLHLSPAAILKELSVYFQKFSSQTRLLTLPAPHELPPREALEYQRHYLIVNHIGALRAEHDDFTIRFASSMNQLLLLKSNDGAYTEWCREVKGNMYDMVVEGFQLLSRWTARIWEQCAWKFSRPCRDAGETPEASGSYSDYEKVVRFNYTAEERKALVELVGYIKSVGSMLQRCDTLVADALWETIHAEVQDFVQNTLATMLRTTFRKKKDLSRILSDMRTLSADWMANTRPEHEMPSSQHGNDESRGNFFYPRPVAPTAAQVHCLQFLIYEVVSGGNLRRPGGFFGNNGSEIPVNDLKQLETFFYKLSFFLHILDYSASIGILTDLGFLWFREFYLESSRVIQFPIECSLPWMLIDYILEAQNSGLLESVLLPFDIYNDSAQQALVVLRQRFLYDEIEAEVDHGFDIFVSRLSESIFTYYKSWSASELLDPSFLFALDNGEKFSIQPVRFTALFKMTKVKILGRTINLRSLIAQRMNRIFRENLEFLFDRFESQDLCAVVELEKLIDILKHSHELLSQDLSIDPFSLMLNEMQENISLVSFSSRLATQIWSEMQSDFLPNFILCNTTQRFVRSSKVPPTQKPSVPSAKPSFYCGTQDLNAAHQSFARLHSGFFGIPHLFSIVKLLGSRSLPWLIRALLDHISNKITTLEPMISGLQEALPKSIGLLSFDGGVTGCMKLIREQLNWGTKSELKSEVLRGIKEIGSVIYTMGLLDIVLREVDTKRFMQTAPWLGLIPGAEGQIVNAQDGESPLVNLLKSATSAVVSSPGCLNPAAFYTMSKQAEAADLLYKANMNGGSVLEYTLAFTSASLDKYCSKWSAPPKTGFVDITTSKDFYRIYGGLQIGYLEEITAPQSAQHEVLGDSIAWGGCTIIYLLGQQLHFELFDFSYQVLNVSEVETVSASHTHRNPQIHQGWEGLLEGMKKARRLNNHVFSMLKARCPLEDKTACAIKQSGAPLPRVRFENTVSAFETLPQKGTVG</sequence>
<reference key="1">
    <citation type="journal article" date="2004" name="Plant Physiol.">
        <title>Arabidopsis NAP and PIR regulate actin-based cell morphogenesis and multiple developmental processes.</title>
        <authorList>
            <person name="Li Y."/>
            <person name="Sorefan K."/>
            <person name="Hemmann G."/>
            <person name="Bevan M.W."/>
        </authorList>
    </citation>
    <scope>NUCLEOTIDE SEQUENCE [MRNA] (ISOFORM 1)</scope>
    <scope>TISSUE SPECIFICITY</scope>
</reference>
<reference key="2">
    <citation type="journal article" date="2004" name="Development">
        <title>Interchangeable functions of Arabidopsis PIROGI and the human WAVE complex subunit SRA1 during leaf epidermal development.</title>
        <authorList>
            <person name="Basu D."/>
            <person name="El-Din El-Assal S."/>
            <person name="Le J."/>
            <person name="Mallery E.L."/>
            <person name="Szymanski D.B."/>
        </authorList>
    </citation>
    <scope>NUCLEOTIDE SEQUENCE [MRNA] (ISOFORM 1)</scope>
    <scope>INTERACTION WITH NAP1 AND RPO2</scope>
    <scope>TISSUE SPECIFICITY</scope>
</reference>
<reference key="3">
    <citation type="journal article" date="2004" name="Plant Cell">
        <title>NAPP and PIRP encode subunits of a putative wave regulatory protein complex involved in plant cell morphogenesis.</title>
        <authorList>
            <person name="Brembu T."/>
            <person name="Winge P."/>
            <person name="Seem M."/>
            <person name="Bones A.M."/>
        </authorList>
    </citation>
    <scope>NUCLEOTIDE SEQUENCE [MRNA] (ISOFORM 1)</scope>
    <scope>IDENTIFICATION (ISOFORM 2)</scope>
    <scope>TISSUE SPECIFICITY</scope>
</reference>
<reference key="4">
    <citation type="journal article" date="2000" name="Nature">
        <title>Sequence and analysis of chromosome 5 of the plant Arabidopsis thaliana.</title>
        <authorList>
            <person name="Tabata S."/>
            <person name="Kaneko T."/>
            <person name="Nakamura Y."/>
            <person name="Kotani H."/>
            <person name="Kato T."/>
            <person name="Asamizu E."/>
            <person name="Miyajima N."/>
            <person name="Sasamoto S."/>
            <person name="Kimura T."/>
            <person name="Hosouchi T."/>
            <person name="Kawashima K."/>
            <person name="Kohara M."/>
            <person name="Matsumoto M."/>
            <person name="Matsuno A."/>
            <person name="Muraki A."/>
            <person name="Nakayama S."/>
            <person name="Nakazaki N."/>
            <person name="Naruo K."/>
            <person name="Okumura S."/>
            <person name="Shinpo S."/>
            <person name="Takeuchi C."/>
            <person name="Wada T."/>
            <person name="Watanabe A."/>
            <person name="Yamada M."/>
            <person name="Yasuda M."/>
            <person name="Sato S."/>
            <person name="de la Bastide M."/>
            <person name="Huang E."/>
            <person name="Spiegel L."/>
            <person name="Gnoj L."/>
            <person name="O'Shaughnessy A."/>
            <person name="Preston R."/>
            <person name="Habermann K."/>
            <person name="Murray J."/>
            <person name="Johnson D."/>
            <person name="Rohlfing T."/>
            <person name="Nelson J."/>
            <person name="Stoneking T."/>
            <person name="Pepin K."/>
            <person name="Spieth J."/>
            <person name="Sekhon M."/>
            <person name="Armstrong J."/>
            <person name="Becker M."/>
            <person name="Belter E."/>
            <person name="Cordum H."/>
            <person name="Cordes M."/>
            <person name="Courtney L."/>
            <person name="Courtney W."/>
            <person name="Dante M."/>
            <person name="Du H."/>
            <person name="Edwards J."/>
            <person name="Fryman J."/>
            <person name="Haakensen B."/>
            <person name="Lamar E."/>
            <person name="Latreille P."/>
            <person name="Leonard S."/>
            <person name="Meyer R."/>
            <person name="Mulvaney E."/>
            <person name="Ozersky P."/>
            <person name="Riley A."/>
            <person name="Strowmatt C."/>
            <person name="Wagner-McPherson C."/>
            <person name="Wollam A."/>
            <person name="Yoakum M."/>
            <person name="Bell M."/>
            <person name="Dedhia N."/>
            <person name="Parnell L."/>
            <person name="Shah R."/>
            <person name="Rodriguez M."/>
            <person name="Hoon See L."/>
            <person name="Vil D."/>
            <person name="Baker J."/>
            <person name="Kirchoff K."/>
            <person name="Toth K."/>
            <person name="King L."/>
            <person name="Bahret A."/>
            <person name="Miller B."/>
            <person name="Marra M.A."/>
            <person name="Martienssen R."/>
            <person name="McCombie W.R."/>
            <person name="Wilson R.K."/>
            <person name="Murphy G."/>
            <person name="Bancroft I."/>
            <person name="Volckaert G."/>
            <person name="Wambutt R."/>
            <person name="Duesterhoeft A."/>
            <person name="Stiekema W."/>
            <person name="Pohl T."/>
            <person name="Entian K.-D."/>
            <person name="Terryn N."/>
            <person name="Hartley N."/>
            <person name="Bent E."/>
            <person name="Johnson S."/>
            <person name="Langham S.-A."/>
            <person name="McCullagh B."/>
            <person name="Robben J."/>
            <person name="Grymonprez B."/>
            <person name="Zimmermann W."/>
            <person name="Ramsperger U."/>
            <person name="Wedler H."/>
            <person name="Balke K."/>
            <person name="Wedler E."/>
            <person name="Peters S."/>
            <person name="van Staveren M."/>
            <person name="Dirkse W."/>
            <person name="Mooijman P."/>
            <person name="Klein Lankhorst R."/>
            <person name="Weitzenegger T."/>
            <person name="Bothe G."/>
            <person name="Rose M."/>
            <person name="Hauf J."/>
            <person name="Berneiser S."/>
            <person name="Hempel S."/>
            <person name="Feldpausch M."/>
            <person name="Lamberth S."/>
            <person name="Villarroel R."/>
            <person name="Gielen J."/>
            <person name="Ardiles W."/>
            <person name="Bents O."/>
            <person name="Lemcke K."/>
            <person name="Kolesov G."/>
            <person name="Mayer K.F.X."/>
            <person name="Rudd S."/>
            <person name="Schoof H."/>
            <person name="Schueller C."/>
            <person name="Zaccaria P."/>
            <person name="Mewes H.-W."/>
            <person name="Bevan M."/>
            <person name="Fransz P.F."/>
        </authorList>
    </citation>
    <scope>NUCLEOTIDE SEQUENCE [LARGE SCALE GENOMIC DNA]</scope>
    <source>
        <strain>cv. Columbia</strain>
    </source>
</reference>
<reference key="5">
    <citation type="journal article" date="2017" name="Plant J.">
        <title>Araport11: a complete reannotation of the Arabidopsis thaliana reference genome.</title>
        <authorList>
            <person name="Cheng C.Y."/>
            <person name="Krishnakumar V."/>
            <person name="Chan A.P."/>
            <person name="Thibaud-Nissen F."/>
            <person name="Schobel S."/>
            <person name="Town C.D."/>
        </authorList>
    </citation>
    <scope>GENOME REANNOTATION</scope>
    <source>
        <strain>cv. Columbia</strain>
    </source>
</reference>
<reference key="6">
    <citation type="journal article" date="2004" name="Curr. Biol.">
        <title>Arabidopsis GNARLED encodes a NAP125 homolog that positively regulates ARP2/3.</title>
        <authorList>
            <person name="El-Din El-Assal S."/>
            <person name="Le J."/>
            <person name="Basu D."/>
            <person name="Mallery E.L."/>
            <person name="Szymanski D.B."/>
        </authorList>
    </citation>
    <scope>TISSUE SPECIFICITY</scope>
    <scope>INTERACTION WITH NAP1</scope>
</reference>
<gene>
    <name type="primary">PIR</name>
    <name type="synonym">KLK</name>
    <name type="synonym">PIRP</name>
    <name type="ordered locus">At5g18410</name>
    <name type="ORF">F20L16.130</name>
</gene>
<feature type="chain" id="PRO_0000076292" description="Protein PIR">
    <location>
        <begin position="1"/>
        <end position="1282"/>
    </location>
</feature>
<feature type="splice variant" id="VSP_041592" description="In isoform 2." evidence="5">
    <original>RE</original>
    <variation>VSP</variation>
    <location>
        <begin position="1022"/>
        <end position="1023"/>
    </location>
</feature>
<evidence type="ECO:0000269" key="1">
    <source>
    </source>
</evidence>
<evidence type="ECO:0000269" key="2">
    <source>
    </source>
</evidence>
<evidence type="ECO:0000269" key="3">
    <source>
    </source>
</evidence>
<evidence type="ECO:0000269" key="4">
    <source>
    </source>
</evidence>
<evidence type="ECO:0000305" key="5"/>
<protein>
    <recommendedName>
        <fullName>Protein PIR</fullName>
    </recommendedName>
    <alternativeName>
        <fullName>PIR of plants</fullName>
    </alternativeName>
    <alternativeName>
        <fullName>Protein KLUNKER</fullName>
        <shortName>AtSRA1</shortName>
    </alternativeName>
    <alternativeName>
        <fullName>Protein PIROGI</fullName>
    </alternativeName>
</protein>
<accession>Q5S2C3</accession>
<accession>Q3E9F2</accession>
<accession>Q6DLU3</accession>
<dbReference type="EMBL" id="AY787212">
    <property type="protein sequence ID" value="AAV64873.1"/>
    <property type="molecule type" value="mRNA"/>
</dbReference>
<dbReference type="EMBL" id="AY662957">
    <property type="protein sequence ID" value="AAT71307.1"/>
    <property type="molecule type" value="mRNA"/>
</dbReference>
<dbReference type="EMBL" id="AY496701">
    <property type="protein sequence ID" value="AAS78644.1"/>
    <property type="molecule type" value="mRNA"/>
</dbReference>
<dbReference type="EMBL" id="AC051626">
    <property type="status" value="NOT_ANNOTATED_CDS"/>
    <property type="molecule type" value="Genomic_DNA"/>
</dbReference>
<dbReference type="EMBL" id="CP002688">
    <property type="protein sequence ID" value="AED92556.1"/>
    <property type="molecule type" value="Genomic_DNA"/>
</dbReference>
<dbReference type="EMBL" id="CP002688">
    <property type="protein sequence ID" value="AED92557.1"/>
    <property type="molecule type" value="Genomic_DNA"/>
</dbReference>
<dbReference type="EMBL" id="BK004073">
    <property type="protein sequence ID" value="DAA04564.1"/>
    <property type="molecule type" value="Genomic_DNA"/>
</dbReference>
<dbReference type="RefSeq" id="NP_197342.3">
    <molecule id="Q5S2C3-2"/>
    <property type="nucleotide sequence ID" value="NM_121846.4"/>
</dbReference>
<dbReference type="RefSeq" id="NP_974801.2">
    <molecule id="Q5S2C3-1"/>
    <property type="nucleotide sequence ID" value="NM_203072.3"/>
</dbReference>
<dbReference type="SMR" id="Q5S2C3"/>
<dbReference type="BioGRID" id="17235">
    <property type="interactions" value="8"/>
</dbReference>
<dbReference type="DIP" id="DIP-29824N"/>
<dbReference type="FunCoup" id="Q5S2C3">
    <property type="interactions" value="3867"/>
</dbReference>
<dbReference type="IntAct" id="Q5S2C3">
    <property type="interactions" value="8"/>
</dbReference>
<dbReference type="STRING" id="3702.Q5S2C3"/>
<dbReference type="GlyGen" id="Q5S2C3">
    <property type="glycosylation" value="1 site"/>
</dbReference>
<dbReference type="PaxDb" id="3702-AT5G18410.1"/>
<dbReference type="ProteomicsDB" id="234762">
    <molecule id="Q5S2C3-1"/>
</dbReference>
<dbReference type="EnsemblPlants" id="AT5G18410.1">
    <molecule id="Q5S2C3-2"/>
    <property type="protein sequence ID" value="AT5G18410.1"/>
    <property type="gene ID" value="AT5G18410"/>
</dbReference>
<dbReference type="EnsemblPlants" id="AT5G18410.2">
    <molecule id="Q5S2C3-1"/>
    <property type="protein sequence ID" value="AT5G18410.2"/>
    <property type="gene ID" value="AT5G18410"/>
</dbReference>
<dbReference type="GeneID" id="831959"/>
<dbReference type="Gramene" id="AT5G18410.1">
    <molecule id="Q5S2C3-2"/>
    <property type="protein sequence ID" value="AT5G18410.1"/>
    <property type="gene ID" value="AT5G18410"/>
</dbReference>
<dbReference type="Gramene" id="AT5G18410.2">
    <molecule id="Q5S2C3-1"/>
    <property type="protein sequence ID" value="AT5G18410.2"/>
    <property type="gene ID" value="AT5G18410"/>
</dbReference>
<dbReference type="KEGG" id="ath:AT5G18410"/>
<dbReference type="Araport" id="AT5G18410"/>
<dbReference type="TAIR" id="AT5G18410">
    <property type="gene designation" value="PIR121"/>
</dbReference>
<dbReference type="eggNOG" id="KOG3534">
    <property type="taxonomic scope" value="Eukaryota"/>
</dbReference>
<dbReference type="InParanoid" id="Q5S2C3"/>
<dbReference type="OMA" id="DQPNRVE"/>
<dbReference type="PRO" id="PR:Q5S2C3"/>
<dbReference type="Proteomes" id="UP000006548">
    <property type="component" value="Chromosome 5"/>
</dbReference>
<dbReference type="ExpressionAtlas" id="Q5S2C3">
    <property type="expression patterns" value="baseline and differential"/>
</dbReference>
<dbReference type="GO" id="GO:0031209">
    <property type="term" value="C:SCAR complex"/>
    <property type="evidence" value="ECO:0000304"/>
    <property type="project" value="TAIR"/>
</dbReference>
<dbReference type="GO" id="GO:0031267">
    <property type="term" value="F:small GTPase binding"/>
    <property type="evidence" value="ECO:0007669"/>
    <property type="project" value="InterPro"/>
</dbReference>
<dbReference type="GO" id="GO:0030036">
    <property type="term" value="P:actin cytoskeleton organization"/>
    <property type="evidence" value="ECO:0000315"/>
    <property type="project" value="TAIR"/>
</dbReference>
<dbReference type="GO" id="GO:0045010">
    <property type="term" value="P:actin nucleation"/>
    <property type="evidence" value="ECO:0000304"/>
    <property type="project" value="TAIR"/>
</dbReference>
<dbReference type="GO" id="GO:0030833">
    <property type="term" value="P:regulation of actin filament polymerization"/>
    <property type="evidence" value="ECO:0007669"/>
    <property type="project" value="InterPro"/>
</dbReference>
<dbReference type="GO" id="GO:0010090">
    <property type="term" value="P:trichome morphogenesis"/>
    <property type="evidence" value="ECO:0000315"/>
    <property type="project" value="TAIR"/>
</dbReference>
<dbReference type="InterPro" id="IPR009828">
    <property type="entry name" value="CYRIA/CYRIB_Rac1-bd"/>
</dbReference>
<dbReference type="InterPro" id="IPR008081">
    <property type="entry name" value="Cytoplasmic_FMR1-int"/>
</dbReference>
<dbReference type="PANTHER" id="PTHR12195">
    <property type="entry name" value="CYTOPLASMIC FMR1-INTERACTING PROTEIN-RELATED"/>
    <property type="match status" value="1"/>
</dbReference>
<dbReference type="Pfam" id="PF07159">
    <property type="entry name" value="CYRIA-B_Rac1-bd"/>
    <property type="match status" value="1"/>
</dbReference>
<dbReference type="Pfam" id="PF05994">
    <property type="entry name" value="FragX_IP"/>
    <property type="match status" value="1"/>
</dbReference>
<dbReference type="PIRSF" id="PIRSF008153">
    <property type="entry name" value="FMR1_interacting"/>
    <property type="match status" value="1"/>
</dbReference>
<dbReference type="PRINTS" id="PR01698">
    <property type="entry name" value="CYTOFMRPINTP"/>
</dbReference>